<reference key="1">
    <citation type="journal article" date="2006" name="Vet. Immunol. Immunopathol.">
        <title>Cloning of fox (Vulpes vulpes) IL2, IL6, IL10 and IFNgamma and analysis of their expression by quantitative RT-PCR in fox PBMC after in vitro stimulation by concanavalin A.</title>
        <authorList>
            <person name="Rolland-Turner M."/>
            <person name="Farre G."/>
            <person name="Boue F."/>
        </authorList>
    </citation>
    <scope>NUCLEOTIDE SEQUENCE [MRNA]</scope>
</reference>
<comment type="function">
    <text evidence="2">Cytokine with a wide variety of biological functions in immunity, tissue regeneration, and metabolism. Binds to IL6R, then the complex associates to the signaling subunit IL6ST/gp130 to trigger the intracellular IL6-signaling pathway. The interaction with the membrane-bound IL6R and IL6ST stimulates 'classic signaling', whereas the binding of IL6 and soluble IL6R to IL6ST stimulates 'trans-signaling'. Alternatively, 'cluster signaling' occurs when membrane-bound IL6:IL6R complexes on transmitter cells activate IL6ST receptors on neighboring receiver cells.</text>
</comment>
<comment type="function">
    <text evidence="2 3">IL6 is a potent inducer of the acute phase response. Rapid production of IL6 contributes to host defense during infection and tissue injury, but excessive IL6 synthesis is involved in disease pathology. In the innate immune response, is synthesized by myeloid cells, such as macrophages and dendritic cells, upon recognition of pathogens through toll-like receptors (TLRs) at the site of infection or tissue injury (By similarity). In the adaptive immune response, is required for the differentiation of B cells into immunoglobulin-secreting cells. Plays a major role in the differentiation of CD4(+) T cell subsets. Essential factor for the development of T follicular helper (Tfh) cells that are required for the induction of germinal-center formation. Required to drive naive CD4(+) T cells to the Th17 lineage. Also required for proliferation of myeloma cells and the survival of plasmablast cells (By similarity).</text>
</comment>
<comment type="function">
    <text evidence="2 3">Acts as an essential factor in bone homeostasis and on vessels directly or indirectly by induction of VEGF, resulting in increased angiogenesis activity and vascular permeability. Induces, through 'trans-signaling' and synergistically with IL1B and TNF, the production of VEGF. Involved in metabolic controls, is discharged into the bloodstream after muscle contraction increasing lipolysis and improving insulin resistance (By similarity). 'Trans-signaling' in central nervous system also regulates energy and glucose homeostasis. Mediates, through GLP-1, crosstalk between insulin-sensitive tissues, intestinal L cells and pancreatic islets to adapt to changes in insulin demand (By similarity). Also acts as a myokine (By similarity). Plays a protective role during liver injury, being required for maintenance of tissue regeneration (By similarity). Also has a pivotal role in iron metabolism by regulating HAMP/hepcidin expression upon inflammation or bacterial infection (By similarity). Through activation of IL6ST-YAP-NOTCH pathway, induces inflammation-induced epithelial regeneration (By similarity).</text>
</comment>
<comment type="subunit">
    <text evidence="2">Component of a hexamer of two molecules each of IL6, IL6R and IL6ST; first binds to IL6R to associate with the signaling subunit IL6ST. Interacts with IL6R (via the N-terminal ectodomain); this interaction may be affected by IL6R-binding with SORL1, hence decreasing IL6 cis signaling. Interacts with SORL1 (via the N-terminal ectodomain); this interaction leads to IL6 internalization and lysosomal degradation. May form a trimeric complex with the soluble SORL1 ectodomain and soluble IL6R receptor; this interaction might stabilize circulating IL6, hence promoting IL6 trans signaling.</text>
</comment>
<comment type="subcellular location">
    <subcellularLocation>
        <location evidence="2">Secreted</location>
    </subcellularLocation>
</comment>
<comment type="similarity">
    <text evidence="5">Belongs to the IL-6 superfamily.</text>
</comment>
<gene>
    <name type="primary">IL6</name>
</gene>
<organism>
    <name type="scientific">Vulpes vulpes</name>
    <name type="common">Red fox</name>
    <dbReference type="NCBI Taxonomy" id="9627"/>
    <lineage>
        <taxon>Eukaryota</taxon>
        <taxon>Metazoa</taxon>
        <taxon>Chordata</taxon>
        <taxon>Craniata</taxon>
        <taxon>Vertebrata</taxon>
        <taxon>Euteleostomi</taxon>
        <taxon>Mammalia</taxon>
        <taxon>Eutheria</taxon>
        <taxon>Laurasiatheria</taxon>
        <taxon>Carnivora</taxon>
        <taxon>Caniformia</taxon>
        <taxon>Canidae</taxon>
        <taxon>Vulpes</taxon>
    </lineage>
</organism>
<keyword id="KW-0011">Acute phase</keyword>
<keyword id="KW-0202">Cytokine</keyword>
<keyword id="KW-1015">Disulfide bond</keyword>
<keyword id="KW-0339">Growth factor</keyword>
<keyword id="KW-0597">Phosphoprotein</keyword>
<keyword id="KW-1185">Reference proteome</keyword>
<keyword id="KW-0964">Secreted</keyword>
<keyword id="KW-0732">Signal</keyword>
<sequence length="207" mass="23043">MNSLSTSAFSLGLLLVMATAFPTPGPLAGDSKDDATSISLPLTSANKVEELIKYILGKISALRKEMCDKFNKCEDSKEALAENNLHLPILEGKDGCFQSGFNQETCLTRITTGLMEFQLHLNILQNNYEGDKENAQSVHMSTKILVQMLKSKVKNQDEVTTPDPTTDATLQAILQSQNEWLKHTTIHLILRSLEDFLQFSLRAVRIM</sequence>
<accession>Q25BC2</accession>
<proteinExistence type="evidence at transcript level"/>
<protein>
    <recommendedName>
        <fullName>Interleukin-6</fullName>
        <shortName>IL-6</shortName>
    </recommendedName>
</protein>
<dbReference type="EMBL" id="AJ621189">
    <property type="protein sequence ID" value="CAF18413.1"/>
    <property type="molecule type" value="mRNA"/>
</dbReference>
<dbReference type="RefSeq" id="XP_025849130.1">
    <property type="nucleotide sequence ID" value="XM_025993345.1"/>
</dbReference>
<dbReference type="SMR" id="Q25BC2"/>
<dbReference type="STRING" id="9627.ENSVVUP00000001673"/>
<dbReference type="Ensembl" id="ENSVVUT00000002435">
    <property type="protein sequence ID" value="ENSVVUP00000001673"/>
    <property type="gene ID" value="ENSVVUG00000001319"/>
</dbReference>
<dbReference type="GeneID" id="112915865"/>
<dbReference type="OMA" id="FSKCENS"/>
<dbReference type="Proteomes" id="UP000286640">
    <property type="component" value="Unplaced"/>
</dbReference>
<dbReference type="GO" id="GO:0005615">
    <property type="term" value="C:extracellular space"/>
    <property type="evidence" value="ECO:0007669"/>
    <property type="project" value="UniProtKB-KW"/>
</dbReference>
<dbReference type="GO" id="GO:0005896">
    <property type="term" value="C:interleukin-6 receptor complex"/>
    <property type="evidence" value="ECO:0007669"/>
    <property type="project" value="Ensembl"/>
</dbReference>
<dbReference type="GO" id="GO:0005125">
    <property type="term" value="F:cytokine activity"/>
    <property type="evidence" value="ECO:0007669"/>
    <property type="project" value="UniProtKB-KW"/>
</dbReference>
<dbReference type="GO" id="GO:0008083">
    <property type="term" value="F:growth factor activity"/>
    <property type="evidence" value="ECO:0007669"/>
    <property type="project" value="UniProtKB-KW"/>
</dbReference>
<dbReference type="GO" id="GO:0042802">
    <property type="term" value="F:identical protein binding"/>
    <property type="evidence" value="ECO:0007669"/>
    <property type="project" value="Ensembl"/>
</dbReference>
<dbReference type="GO" id="GO:0005138">
    <property type="term" value="F:interleukin-6 receptor binding"/>
    <property type="evidence" value="ECO:0007669"/>
    <property type="project" value="Ensembl"/>
</dbReference>
<dbReference type="GO" id="GO:0006953">
    <property type="term" value="P:acute-phase response"/>
    <property type="evidence" value="ECO:0007669"/>
    <property type="project" value="UniProtKB-KW"/>
</dbReference>
<dbReference type="GO" id="GO:0007259">
    <property type="term" value="P:cell surface receptor signaling pathway via JAK-STAT"/>
    <property type="evidence" value="ECO:0007669"/>
    <property type="project" value="Ensembl"/>
</dbReference>
<dbReference type="GO" id="GO:0070301">
    <property type="term" value="P:cellular response to hydrogen peroxide"/>
    <property type="evidence" value="ECO:0007669"/>
    <property type="project" value="Ensembl"/>
</dbReference>
<dbReference type="GO" id="GO:0071222">
    <property type="term" value="P:cellular response to lipopolysaccharide"/>
    <property type="evidence" value="ECO:0007669"/>
    <property type="project" value="Ensembl"/>
</dbReference>
<dbReference type="GO" id="GO:0051607">
    <property type="term" value="P:defense response to virus"/>
    <property type="evidence" value="ECO:0007669"/>
    <property type="project" value="Ensembl"/>
</dbReference>
<dbReference type="GO" id="GO:0042593">
    <property type="term" value="P:glucose homeostasis"/>
    <property type="evidence" value="ECO:0000250"/>
    <property type="project" value="UniProtKB"/>
</dbReference>
<dbReference type="GO" id="GO:0002384">
    <property type="term" value="P:hepatic immune response"/>
    <property type="evidence" value="ECO:0007669"/>
    <property type="project" value="Ensembl"/>
</dbReference>
<dbReference type="GO" id="GO:0072574">
    <property type="term" value="P:hepatocyte proliferation"/>
    <property type="evidence" value="ECO:0000250"/>
    <property type="project" value="UniProtKB"/>
</dbReference>
<dbReference type="GO" id="GO:0090594">
    <property type="term" value="P:inflammatory response to wounding"/>
    <property type="evidence" value="ECO:0007669"/>
    <property type="project" value="Ensembl"/>
</dbReference>
<dbReference type="GO" id="GO:0070102">
    <property type="term" value="P:interleukin-6-mediated signaling pathway"/>
    <property type="evidence" value="ECO:0000250"/>
    <property type="project" value="UniProtKB"/>
</dbReference>
<dbReference type="GO" id="GO:0097421">
    <property type="term" value="P:liver regeneration"/>
    <property type="evidence" value="ECO:0000250"/>
    <property type="project" value="UniProtKB"/>
</dbReference>
<dbReference type="GO" id="GO:0043066">
    <property type="term" value="P:negative regulation of apoptotic process"/>
    <property type="evidence" value="ECO:0007669"/>
    <property type="project" value="Ensembl"/>
</dbReference>
<dbReference type="GO" id="GO:0032966">
    <property type="term" value="P:negative regulation of collagen biosynthetic process"/>
    <property type="evidence" value="ECO:0007669"/>
    <property type="project" value="Ensembl"/>
</dbReference>
<dbReference type="GO" id="GO:2000635">
    <property type="term" value="P:negative regulation of primary miRNA processing"/>
    <property type="evidence" value="ECO:0007669"/>
    <property type="project" value="Ensembl"/>
</dbReference>
<dbReference type="GO" id="GO:0031175">
    <property type="term" value="P:neuron projection development"/>
    <property type="evidence" value="ECO:0007669"/>
    <property type="project" value="Ensembl"/>
</dbReference>
<dbReference type="GO" id="GO:0001781">
    <property type="term" value="P:neutrophil apoptotic process"/>
    <property type="evidence" value="ECO:0007669"/>
    <property type="project" value="Ensembl"/>
</dbReference>
<dbReference type="GO" id="GO:0002675">
    <property type="term" value="P:positive regulation of acute inflammatory response"/>
    <property type="evidence" value="ECO:0007669"/>
    <property type="project" value="Ensembl"/>
</dbReference>
<dbReference type="GO" id="GO:1902512">
    <property type="term" value="P:positive regulation of apoptotic DNA fragmentation"/>
    <property type="evidence" value="ECO:0007669"/>
    <property type="project" value="Ensembl"/>
</dbReference>
<dbReference type="GO" id="GO:0043065">
    <property type="term" value="P:positive regulation of apoptotic process"/>
    <property type="evidence" value="ECO:0007669"/>
    <property type="project" value="Ensembl"/>
</dbReference>
<dbReference type="GO" id="GO:0050871">
    <property type="term" value="P:positive regulation of B cell activation"/>
    <property type="evidence" value="ECO:0007669"/>
    <property type="project" value="Ensembl"/>
</dbReference>
<dbReference type="GO" id="GO:0032722">
    <property type="term" value="P:positive regulation of chemokine production"/>
    <property type="evidence" value="ECO:0007669"/>
    <property type="project" value="Ensembl"/>
</dbReference>
<dbReference type="GO" id="GO:1900017">
    <property type="term" value="P:positive regulation of cytokine production involved in inflammatory response"/>
    <property type="evidence" value="ECO:0007669"/>
    <property type="project" value="Ensembl"/>
</dbReference>
<dbReference type="GO" id="GO:0010718">
    <property type="term" value="P:positive regulation of epithelial to mesenchymal transition"/>
    <property type="evidence" value="ECO:0007669"/>
    <property type="project" value="Ensembl"/>
</dbReference>
<dbReference type="GO" id="GO:0090091">
    <property type="term" value="P:positive regulation of extracellular matrix disassembly"/>
    <property type="evidence" value="ECO:0007669"/>
    <property type="project" value="Ensembl"/>
</dbReference>
<dbReference type="GO" id="GO:0060252">
    <property type="term" value="P:positive regulation of glial cell proliferation"/>
    <property type="evidence" value="ECO:0007669"/>
    <property type="project" value="Ensembl"/>
</dbReference>
<dbReference type="GO" id="GO:0002639">
    <property type="term" value="P:positive regulation of immunoglobulin production"/>
    <property type="evidence" value="ECO:0007669"/>
    <property type="project" value="Ensembl"/>
</dbReference>
<dbReference type="GO" id="GO:0032731">
    <property type="term" value="P:positive regulation of interleukin-1 beta production"/>
    <property type="evidence" value="ECO:0007669"/>
    <property type="project" value="Ensembl"/>
</dbReference>
<dbReference type="GO" id="GO:0032733">
    <property type="term" value="P:positive regulation of interleukin-10 production"/>
    <property type="evidence" value="ECO:0007669"/>
    <property type="project" value="Ensembl"/>
</dbReference>
<dbReference type="GO" id="GO:0032755">
    <property type="term" value="P:positive regulation of interleukin-6 production"/>
    <property type="evidence" value="ECO:0007669"/>
    <property type="project" value="Ensembl"/>
</dbReference>
<dbReference type="GO" id="GO:0032757">
    <property type="term" value="P:positive regulation of interleukin-8 production"/>
    <property type="evidence" value="ECO:0007669"/>
    <property type="project" value="Ensembl"/>
</dbReference>
<dbReference type="GO" id="GO:1904996">
    <property type="term" value="P:positive regulation of leukocyte adhesion to vascular endothelial cell"/>
    <property type="evidence" value="ECO:0007669"/>
    <property type="project" value="Ensembl"/>
</dbReference>
<dbReference type="GO" id="GO:0043410">
    <property type="term" value="P:positive regulation of MAPK cascade"/>
    <property type="evidence" value="ECO:0007669"/>
    <property type="project" value="Ensembl"/>
</dbReference>
<dbReference type="GO" id="GO:1902895">
    <property type="term" value="P:positive regulation of miRNA transcription"/>
    <property type="evidence" value="ECO:0007669"/>
    <property type="project" value="Ensembl"/>
</dbReference>
<dbReference type="GO" id="GO:1901731">
    <property type="term" value="P:positive regulation of platelet aggregation"/>
    <property type="evidence" value="ECO:0007669"/>
    <property type="project" value="Ensembl"/>
</dbReference>
<dbReference type="GO" id="GO:0046427">
    <property type="term" value="P:positive regulation of receptor signaling pathway via JAK-STAT"/>
    <property type="evidence" value="ECO:0007669"/>
    <property type="project" value="Ensembl"/>
</dbReference>
<dbReference type="GO" id="GO:1904894">
    <property type="term" value="P:positive regulation of receptor signaling pathway via STAT"/>
    <property type="evidence" value="ECO:0000250"/>
    <property type="project" value="UniProtKB"/>
</dbReference>
<dbReference type="GO" id="GO:0048661">
    <property type="term" value="P:positive regulation of smooth muscle cell proliferation"/>
    <property type="evidence" value="ECO:0007669"/>
    <property type="project" value="Ensembl"/>
</dbReference>
<dbReference type="GO" id="GO:0042102">
    <property type="term" value="P:positive regulation of T cell proliferation"/>
    <property type="evidence" value="ECO:0007669"/>
    <property type="project" value="Ensembl"/>
</dbReference>
<dbReference type="GO" id="GO:0045944">
    <property type="term" value="P:positive regulation of transcription by RNA polymerase II"/>
    <property type="evidence" value="ECO:0007669"/>
    <property type="project" value="Ensembl"/>
</dbReference>
<dbReference type="GO" id="GO:0045727">
    <property type="term" value="P:positive regulation of translation"/>
    <property type="evidence" value="ECO:0007669"/>
    <property type="project" value="Ensembl"/>
</dbReference>
<dbReference type="GO" id="GO:0032760">
    <property type="term" value="P:positive regulation of tumor necrosis factor production"/>
    <property type="evidence" value="ECO:0007669"/>
    <property type="project" value="Ensembl"/>
</dbReference>
<dbReference type="GO" id="GO:0010575">
    <property type="term" value="P:positive regulation of vascular endothelial growth factor production"/>
    <property type="evidence" value="ECO:0007669"/>
    <property type="project" value="Ensembl"/>
</dbReference>
<dbReference type="GO" id="GO:0070092">
    <property type="term" value="P:regulation of glucagon secretion"/>
    <property type="evidence" value="ECO:0000250"/>
    <property type="project" value="UniProtKB"/>
</dbReference>
<dbReference type="GO" id="GO:0050796">
    <property type="term" value="P:regulation of insulin secretion"/>
    <property type="evidence" value="ECO:0000250"/>
    <property type="project" value="UniProtKB"/>
</dbReference>
<dbReference type="GO" id="GO:0014823">
    <property type="term" value="P:response to activity"/>
    <property type="evidence" value="ECO:0000250"/>
    <property type="project" value="UniProtKB"/>
</dbReference>
<dbReference type="GO" id="GO:0051384">
    <property type="term" value="P:response to glucocorticoid"/>
    <property type="evidence" value="ECO:0007669"/>
    <property type="project" value="Ensembl"/>
</dbReference>
<dbReference type="GO" id="GO:0072540">
    <property type="term" value="P:T-helper 17 cell lineage commitment"/>
    <property type="evidence" value="ECO:0000250"/>
    <property type="project" value="UniProtKB"/>
</dbReference>
<dbReference type="GO" id="GO:0010573">
    <property type="term" value="P:vascular endothelial growth factor production"/>
    <property type="evidence" value="ECO:0000250"/>
    <property type="project" value="UniProtKB"/>
</dbReference>
<dbReference type="FunFam" id="1.20.1250.10:FF:000006">
    <property type="entry name" value="Interleukin-6"/>
    <property type="match status" value="1"/>
</dbReference>
<dbReference type="Gene3D" id="1.20.1250.10">
    <property type="match status" value="1"/>
</dbReference>
<dbReference type="InterPro" id="IPR009079">
    <property type="entry name" value="4_helix_cytokine-like_core"/>
</dbReference>
<dbReference type="InterPro" id="IPR003574">
    <property type="entry name" value="IL-6-like"/>
</dbReference>
<dbReference type="InterPro" id="IPR030474">
    <property type="entry name" value="IL-6/GCSF/MGF"/>
</dbReference>
<dbReference type="InterPro" id="IPR030473">
    <property type="entry name" value="IL6/GCSF/MGF_CS"/>
</dbReference>
<dbReference type="PANTHER" id="PTHR48494">
    <property type="entry name" value="INTERLEUKIN-6"/>
    <property type="match status" value="1"/>
</dbReference>
<dbReference type="PANTHER" id="PTHR48494:SF1">
    <property type="entry name" value="INTERLEUKIN-6"/>
    <property type="match status" value="1"/>
</dbReference>
<dbReference type="Pfam" id="PF00489">
    <property type="entry name" value="IL6"/>
    <property type="match status" value="1"/>
</dbReference>
<dbReference type="PIRSF" id="PIRSF001935">
    <property type="entry name" value="IL6_MGF_GCSF"/>
    <property type="match status" value="1"/>
</dbReference>
<dbReference type="PRINTS" id="PR00433">
    <property type="entry name" value="IL6GCSFMGF"/>
</dbReference>
<dbReference type="PRINTS" id="PR00434">
    <property type="entry name" value="INTERLEUKIN6"/>
</dbReference>
<dbReference type="SMART" id="SM00126">
    <property type="entry name" value="IL6"/>
    <property type="match status" value="1"/>
</dbReference>
<dbReference type="SUPFAM" id="SSF47266">
    <property type="entry name" value="4-helical cytokines"/>
    <property type="match status" value="1"/>
</dbReference>
<dbReference type="PROSITE" id="PS00254">
    <property type="entry name" value="INTERLEUKIN_6"/>
    <property type="match status" value="1"/>
</dbReference>
<name>IL6_VULVU</name>
<evidence type="ECO:0000250" key="1"/>
<evidence type="ECO:0000250" key="2">
    <source>
        <dbReference type="UniProtKB" id="P05231"/>
    </source>
</evidence>
<evidence type="ECO:0000250" key="3">
    <source>
        <dbReference type="UniProtKB" id="P08505"/>
    </source>
</evidence>
<evidence type="ECO:0000255" key="4"/>
<evidence type="ECO:0000305" key="5"/>
<feature type="signal peptide" evidence="4">
    <location>
        <begin position="1"/>
        <end position="20"/>
    </location>
</feature>
<feature type="chain" id="PRO_0000235172" description="Interleukin-6">
    <location>
        <begin position="21"/>
        <end position="207"/>
    </location>
</feature>
<feature type="modified residue" description="Phosphoserine" evidence="2">
    <location>
        <position position="76"/>
    </location>
</feature>
<feature type="disulfide bond" evidence="1">
    <location>
        <begin position="67"/>
        <end position="73"/>
    </location>
</feature>
<feature type="disulfide bond" evidence="1">
    <location>
        <begin position="96"/>
        <end position="106"/>
    </location>
</feature>